<keyword id="KW-0687">Ribonucleoprotein</keyword>
<keyword id="KW-0689">Ribosomal protein</keyword>
<keyword id="KW-0694">RNA-binding</keyword>
<keyword id="KW-0699">rRNA-binding</keyword>
<keyword id="KW-0820">tRNA-binding</keyword>
<organism>
    <name type="scientific">Rhodopseudomonas palustris (strain BisB5)</name>
    <dbReference type="NCBI Taxonomy" id="316057"/>
    <lineage>
        <taxon>Bacteria</taxon>
        <taxon>Pseudomonadati</taxon>
        <taxon>Pseudomonadota</taxon>
        <taxon>Alphaproteobacteria</taxon>
        <taxon>Hyphomicrobiales</taxon>
        <taxon>Nitrobacteraceae</taxon>
        <taxon>Rhodopseudomonas</taxon>
    </lineage>
</organism>
<reference key="1">
    <citation type="submission" date="2006-03" db="EMBL/GenBank/DDBJ databases">
        <title>Complete sequence of Rhodopseudomonas palustris BisB5.</title>
        <authorList>
            <consortium name="US DOE Joint Genome Institute"/>
            <person name="Copeland A."/>
            <person name="Lucas S."/>
            <person name="Lapidus A."/>
            <person name="Barry K."/>
            <person name="Detter J.C."/>
            <person name="Glavina del Rio T."/>
            <person name="Hammon N."/>
            <person name="Israni S."/>
            <person name="Dalin E."/>
            <person name="Tice H."/>
            <person name="Pitluck S."/>
            <person name="Chain P."/>
            <person name="Malfatti S."/>
            <person name="Shin M."/>
            <person name="Vergez L."/>
            <person name="Schmutz J."/>
            <person name="Larimer F."/>
            <person name="Land M."/>
            <person name="Hauser L."/>
            <person name="Pelletier D.A."/>
            <person name="Kyrpides N."/>
            <person name="Lykidis A."/>
            <person name="Oda Y."/>
            <person name="Harwood C.S."/>
            <person name="Richardson P."/>
        </authorList>
    </citation>
    <scope>NUCLEOTIDE SEQUENCE [LARGE SCALE GENOMIC DNA]</scope>
    <source>
        <strain>BisB5</strain>
    </source>
</reference>
<name>RL16_RHOPS</name>
<protein>
    <recommendedName>
        <fullName evidence="1">Large ribosomal subunit protein uL16</fullName>
    </recommendedName>
    <alternativeName>
        <fullName evidence="2">50S ribosomal protein L16</fullName>
    </alternativeName>
</protein>
<sequence length="137" mass="15224">MMQPKKTKFRKAHKGRIHGVASSGATLAFGQFGLKAMEPERVTARQIEAARRALTRHMKRAGRVWIRIFPDVPVSKKPAEVRMGSGKGAPELWVARVKPGRVMFEIDGVNQQIAREALTLAAAKLPIKTRFVARIAE</sequence>
<comment type="function">
    <text evidence="1">Binds 23S rRNA and is also seen to make contacts with the A and possibly P site tRNAs.</text>
</comment>
<comment type="subunit">
    <text evidence="1">Part of the 50S ribosomal subunit.</text>
</comment>
<comment type="similarity">
    <text evidence="1">Belongs to the universal ribosomal protein uL16 family.</text>
</comment>
<accession>Q37M36</accession>
<proteinExistence type="inferred from homology"/>
<gene>
    <name evidence="1" type="primary">rplP</name>
    <name type="ordered locus">RPD_3177</name>
</gene>
<feature type="chain" id="PRO_0000251663" description="Large ribosomal subunit protein uL16">
    <location>
        <begin position="1"/>
        <end position="137"/>
    </location>
</feature>
<evidence type="ECO:0000255" key="1">
    <source>
        <dbReference type="HAMAP-Rule" id="MF_01342"/>
    </source>
</evidence>
<evidence type="ECO:0000305" key="2"/>
<dbReference type="EMBL" id="CP000283">
    <property type="protein sequence ID" value="ABE40403.1"/>
    <property type="molecule type" value="Genomic_DNA"/>
</dbReference>
<dbReference type="SMR" id="Q37M36"/>
<dbReference type="STRING" id="316057.RPD_3177"/>
<dbReference type="KEGG" id="rpd:RPD_3177"/>
<dbReference type="eggNOG" id="COG0197">
    <property type="taxonomic scope" value="Bacteria"/>
</dbReference>
<dbReference type="HOGENOM" id="CLU_078858_2_1_5"/>
<dbReference type="BioCyc" id="RPAL316057:RPD_RS15950-MONOMER"/>
<dbReference type="Proteomes" id="UP000001818">
    <property type="component" value="Chromosome"/>
</dbReference>
<dbReference type="GO" id="GO:0022625">
    <property type="term" value="C:cytosolic large ribosomal subunit"/>
    <property type="evidence" value="ECO:0007669"/>
    <property type="project" value="TreeGrafter"/>
</dbReference>
<dbReference type="GO" id="GO:0019843">
    <property type="term" value="F:rRNA binding"/>
    <property type="evidence" value="ECO:0007669"/>
    <property type="project" value="UniProtKB-UniRule"/>
</dbReference>
<dbReference type="GO" id="GO:0003735">
    <property type="term" value="F:structural constituent of ribosome"/>
    <property type="evidence" value="ECO:0007669"/>
    <property type="project" value="InterPro"/>
</dbReference>
<dbReference type="GO" id="GO:0000049">
    <property type="term" value="F:tRNA binding"/>
    <property type="evidence" value="ECO:0007669"/>
    <property type="project" value="UniProtKB-KW"/>
</dbReference>
<dbReference type="GO" id="GO:0006412">
    <property type="term" value="P:translation"/>
    <property type="evidence" value="ECO:0007669"/>
    <property type="project" value="UniProtKB-UniRule"/>
</dbReference>
<dbReference type="CDD" id="cd01433">
    <property type="entry name" value="Ribosomal_L16_L10e"/>
    <property type="match status" value="1"/>
</dbReference>
<dbReference type="FunFam" id="3.90.1170.10:FF:000001">
    <property type="entry name" value="50S ribosomal protein L16"/>
    <property type="match status" value="1"/>
</dbReference>
<dbReference type="Gene3D" id="3.90.1170.10">
    <property type="entry name" value="Ribosomal protein L10e/L16"/>
    <property type="match status" value="1"/>
</dbReference>
<dbReference type="HAMAP" id="MF_01342">
    <property type="entry name" value="Ribosomal_uL16"/>
    <property type="match status" value="1"/>
</dbReference>
<dbReference type="InterPro" id="IPR047873">
    <property type="entry name" value="Ribosomal_uL16"/>
</dbReference>
<dbReference type="InterPro" id="IPR000114">
    <property type="entry name" value="Ribosomal_uL16_bact-type"/>
</dbReference>
<dbReference type="InterPro" id="IPR020798">
    <property type="entry name" value="Ribosomal_uL16_CS"/>
</dbReference>
<dbReference type="InterPro" id="IPR016180">
    <property type="entry name" value="Ribosomal_uL16_dom"/>
</dbReference>
<dbReference type="InterPro" id="IPR036920">
    <property type="entry name" value="Ribosomal_uL16_sf"/>
</dbReference>
<dbReference type="NCBIfam" id="TIGR01164">
    <property type="entry name" value="rplP_bact"/>
    <property type="match status" value="1"/>
</dbReference>
<dbReference type="PANTHER" id="PTHR12220">
    <property type="entry name" value="50S/60S RIBOSOMAL PROTEIN L16"/>
    <property type="match status" value="1"/>
</dbReference>
<dbReference type="PANTHER" id="PTHR12220:SF13">
    <property type="entry name" value="LARGE RIBOSOMAL SUBUNIT PROTEIN UL16M"/>
    <property type="match status" value="1"/>
</dbReference>
<dbReference type="Pfam" id="PF00252">
    <property type="entry name" value="Ribosomal_L16"/>
    <property type="match status" value="1"/>
</dbReference>
<dbReference type="PRINTS" id="PR00060">
    <property type="entry name" value="RIBOSOMALL16"/>
</dbReference>
<dbReference type="SUPFAM" id="SSF54686">
    <property type="entry name" value="Ribosomal protein L16p/L10e"/>
    <property type="match status" value="1"/>
</dbReference>
<dbReference type="PROSITE" id="PS00586">
    <property type="entry name" value="RIBOSOMAL_L16_1"/>
    <property type="match status" value="1"/>
</dbReference>
<dbReference type="PROSITE" id="PS00701">
    <property type="entry name" value="RIBOSOMAL_L16_2"/>
    <property type="match status" value="1"/>
</dbReference>